<protein>
    <recommendedName>
        <fullName evidence="1">Probable tRNA pseudouridine synthase B</fullName>
        <ecNumber evidence="1">5.4.99.25</ecNumber>
    </recommendedName>
    <alternativeName>
        <fullName evidence="1">tRNA pseudouridine(55) synthase</fullName>
        <shortName evidence="1">Psi55 synthase</shortName>
    </alternativeName>
    <alternativeName>
        <fullName evidence="1">tRNA pseudouridylate synthase</fullName>
    </alternativeName>
    <alternativeName>
        <fullName evidence="1">tRNA-uridine isomerase</fullName>
    </alternativeName>
</protein>
<proteinExistence type="inferred from homology"/>
<accession>Q9HPA4</accession>
<feature type="chain" id="PRO_0000121957" description="Probable tRNA pseudouridine synthase B">
    <location>
        <begin position="1"/>
        <end position="301"/>
    </location>
</feature>
<feature type="domain" description="PUA" evidence="1">
    <location>
        <begin position="227"/>
        <end position="301"/>
    </location>
</feature>
<feature type="active site" description="Nucleophile" evidence="1">
    <location>
        <position position="54"/>
    </location>
</feature>
<name>TRUB_HALSA</name>
<comment type="function">
    <text evidence="1">Could be responsible for synthesis of pseudouridine from uracil-55 in the psi GC loop of transfer RNAs.</text>
</comment>
<comment type="catalytic activity">
    <reaction evidence="1">
        <text>uridine(55) in tRNA = pseudouridine(55) in tRNA</text>
        <dbReference type="Rhea" id="RHEA:42532"/>
        <dbReference type="Rhea" id="RHEA-COMP:10101"/>
        <dbReference type="Rhea" id="RHEA-COMP:10102"/>
        <dbReference type="ChEBI" id="CHEBI:65314"/>
        <dbReference type="ChEBI" id="CHEBI:65315"/>
        <dbReference type="EC" id="5.4.99.25"/>
    </reaction>
</comment>
<comment type="similarity">
    <text evidence="1">Belongs to the pseudouridine synthase TruB family. Type 2 subfamily.</text>
</comment>
<reference key="1">
    <citation type="journal article" date="2000" name="Proc. Natl. Acad. Sci. U.S.A.">
        <title>Genome sequence of Halobacterium species NRC-1.</title>
        <authorList>
            <person name="Ng W.V."/>
            <person name="Kennedy S.P."/>
            <person name="Mahairas G.G."/>
            <person name="Berquist B."/>
            <person name="Pan M."/>
            <person name="Shukla H.D."/>
            <person name="Lasky S.R."/>
            <person name="Baliga N.S."/>
            <person name="Thorsson V."/>
            <person name="Sbrogna J."/>
            <person name="Swartzell S."/>
            <person name="Weir D."/>
            <person name="Hall J."/>
            <person name="Dahl T.A."/>
            <person name="Welti R."/>
            <person name="Goo Y.A."/>
            <person name="Leithauser B."/>
            <person name="Keller K."/>
            <person name="Cruz R."/>
            <person name="Danson M.J."/>
            <person name="Hough D.W."/>
            <person name="Maddocks D.G."/>
            <person name="Jablonski P.E."/>
            <person name="Krebs M.P."/>
            <person name="Angevine C.M."/>
            <person name="Dale H."/>
            <person name="Isenbarger T.A."/>
            <person name="Peck R.F."/>
            <person name="Pohlschroder M."/>
            <person name="Spudich J.L."/>
            <person name="Jung K.-H."/>
            <person name="Alam M."/>
            <person name="Freitas T."/>
            <person name="Hou S."/>
            <person name="Daniels C.J."/>
            <person name="Dennis P.P."/>
            <person name="Omer A.D."/>
            <person name="Ebhardt H."/>
            <person name="Lowe T.M."/>
            <person name="Liang P."/>
            <person name="Riley M."/>
            <person name="Hood L."/>
            <person name="DasSarma S."/>
        </authorList>
    </citation>
    <scope>NUCLEOTIDE SEQUENCE [LARGE SCALE GENOMIC DNA]</scope>
    <source>
        <strain>ATCC 700922 / JCM 11081 / NRC-1</strain>
    </source>
</reference>
<sequence length="301" mass="31825">MGIRPPPGERSPAAVLSFGVVNLDKPPGPSAHQVSAWIRDLVGVEKAAHAGTLDPKVTGCLPVLTGTATRIAPALLEGFKEYVAVLELHDDPPRILPDVIEAFTGEIYQKPPKKSAVARRLRTRTVYDLDVLDVDGRQVLLRIRCESGTYIRKLCHDIGRALGTNAHMGHLRRSATTPFDDTDLVTLHDLADAVAWLRDTDDTEPPDAPADALRAAVQPAERALTHLPRLTIADSAAHEVATGAPVYAPGVIDTTALPTPPADGALVACYTAGGTAVCLGRLVGDPDADAGVVVALERVLV</sequence>
<organism>
    <name type="scientific">Halobacterium salinarum (strain ATCC 700922 / JCM 11081 / NRC-1)</name>
    <name type="common">Halobacterium halobium</name>
    <dbReference type="NCBI Taxonomy" id="64091"/>
    <lineage>
        <taxon>Archaea</taxon>
        <taxon>Methanobacteriati</taxon>
        <taxon>Methanobacteriota</taxon>
        <taxon>Stenosarchaea group</taxon>
        <taxon>Halobacteria</taxon>
        <taxon>Halobacteriales</taxon>
        <taxon>Halobacteriaceae</taxon>
        <taxon>Halobacterium</taxon>
        <taxon>Halobacterium salinarum NRC-34001</taxon>
    </lineage>
</organism>
<gene>
    <name evidence="1" type="primary">truB</name>
    <name type="synonym">sus</name>
    <name type="ordered locus">VNG_1729G</name>
</gene>
<evidence type="ECO:0000255" key="1">
    <source>
        <dbReference type="HAMAP-Rule" id="MF_01081"/>
    </source>
</evidence>
<dbReference type="EC" id="5.4.99.25" evidence="1"/>
<dbReference type="EMBL" id="AE004437">
    <property type="protein sequence ID" value="AAG19966.1"/>
    <property type="molecule type" value="Genomic_DNA"/>
</dbReference>
<dbReference type="PIR" id="B84325">
    <property type="entry name" value="B84325"/>
</dbReference>
<dbReference type="RefSeq" id="WP_012289369.1">
    <property type="nucleotide sequence ID" value="NC_002607.1"/>
</dbReference>
<dbReference type="SMR" id="Q9HPA4"/>
<dbReference type="FunCoup" id="Q9HPA4">
    <property type="interactions" value="181"/>
</dbReference>
<dbReference type="STRING" id="64091.VNG_1729G"/>
<dbReference type="PaxDb" id="64091-VNG_1729G"/>
<dbReference type="KEGG" id="hal:VNG_1729G"/>
<dbReference type="PATRIC" id="fig|64091.14.peg.1319"/>
<dbReference type="HOGENOM" id="CLU_032087_3_0_2"/>
<dbReference type="InParanoid" id="Q9HPA4"/>
<dbReference type="OrthoDB" id="35866at2157"/>
<dbReference type="PhylomeDB" id="Q9HPA4"/>
<dbReference type="Proteomes" id="UP000000554">
    <property type="component" value="Chromosome"/>
</dbReference>
<dbReference type="GO" id="GO:0009982">
    <property type="term" value="F:pseudouridine synthase activity"/>
    <property type="evidence" value="ECO:0000318"/>
    <property type="project" value="GO_Central"/>
</dbReference>
<dbReference type="GO" id="GO:0003723">
    <property type="term" value="F:RNA binding"/>
    <property type="evidence" value="ECO:0007669"/>
    <property type="project" value="InterPro"/>
</dbReference>
<dbReference type="GO" id="GO:0160148">
    <property type="term" value="F:tRNA pseudouridine(55) synthase activity"/>
    <property type="evidence" value="ECO:0007669"/>
    <property type="project" value="UniProtKB-EC"/>
</dbReference>
<dbReference type="GO" id="GO:0000495">
    <property type="term" value="P:box H/ACA sno(s)RNA 3'-end processing"/>
    <property type="evidence" value="ECO:0000318"/>
    <property type="project" value="GO_Central"/>
</dbReference>
<dbReference type="GO" id="GO:1990481">
    <property type="term" value="P:mRNA pseudouridine synthesis"/>
    <property type="evidence" value="ECO:0000318"/>
    <property type="project" value="GO_Central"/>
</dbReference>
<dbReference type="GO" id="GO:0031118">
    <property type="term" value="P:rRNA pseudouridine synthesis"/>
    <property type="evidence" value="ECO:0000318"/>
    <property type="project" value="GO_Central"/>
</dbReference>
<dbReference type="GO" id="GO:0031120">
    <property type="term" value="P:snRNA pseudouridine synthesis"/>
    <property type="evidence" value="ECO:0000318"/>
    <property type="project" value="GO_Central"/>
</dbReference>
<dbReference type="GO" id="GO:0031119">
    <property type="term" value="P:tRNA pseudouridine synthesis"/>
    <property type="evidence" value="ECO:0007669"/>
    <property type="project" value="UniProtKB-UniRule"/>
</dbReference>
<dbReference type="CDD" id="cd02572">
    <property type="entry name" value="PseudoU_synth_hDyskerin"/>
    <property type="match status" value="1"/>
</dbReference>
<dbReference type="CDD" id="cd21148">
    <property type="entry name" value="PUA_Cbf5"/>
    <property type="match status" value="1"/>
</dbReference>
<dbReference type="FunFam" id="3.30.2350.10:FF:000001">
    <property type="entry name" value="H/ACA ribonucleoprotein complex subunit CBF5"/>
    <property type="match status" value="1"/>
</dbReference>
<dbReference type="Gene3D" id="3.30.2350.10">
    <property type="entry name" value="Pseudouridine synthase"/>
    <property type="match status" value="1"/>
</dbReference>
<dbReference type="Gene3D" id="2.30.130.10">
    <property type="entry name" value="PUA domain"/>
    <property type="match status" value="1"/>
</dbReference>
<dbReference type="HAMAP" id="MF_01081">
    <property type="entry name" value="TruB_arch"/>
    <property type="match status" value="1"/>
</dbReference>
<dbReference type="InterPro" id="IPR012960">
    <property type="entry name" value="Dyskerin-like"/>
</dbReference>
<dbReference type="InterPro" id="IPR020103">
    <property type="entry name" value="PsdUridine_synth_cat_dom_sf"/>
</dbReference>
<dbReference type="InterPro" id="IPR002501">
    <property type="entry name" value="PsdUridine_synth_N"/>
</dbReference>
<dbReference type="InterPro" id="IPR015947">
    <property type="entry name" value="PUA-like_sf"/>
</dbReference>
<dbReference type="InterPro" id="IPR036974">
    <property type="entry name" value="PUA_sf"/>
</dbReference>
<dbReference type="InterPro" id="IPR004802">
    <property type="entry name" value="tRNA_PsdUridine_synth_B_fam"/>
</dbReference>
<dbReference type="InterPro" id="IPR026326">
    <property type="entry name" value="TruB_arch"/>
</dbReference>
<dbReference type="InterPro" id="IPR032819">
    <property type="entry name" value="TruB_C"/>
</dbReference>
<dbReference type="NCBIfam" id="TIGR00425">
    <property type="entry name" value="CBF5"/>
    <property type="match status" value="1"/>
</dbReference>
<dbReference type="NCBIfam" id="NF003280">
    <property type="entry name" value="PRK04270.1"/>
    <property type="match status" value="1"/>
</dbReference>
<dbReference type="PANTHER" id="PTHR23127">
    <property type="entry name" value="CENTROMERE/MICROTUBULE BINDING PROTEIN CBF5"/>
    <property type="match status" value="1"/>
</dbReference>
<dbReference type="PANTHER" id="PTHR23127:SF0">
    <property type="entry name" value="H_ACA RIBONUCLEOPROTEIN COMPLEX SUBUNIT DKC1"/>
    <property type="match status" value="1"/>
</dbReference>
<dbReference type="Pfam" id="PF16198">
    <property type="entry name" value="TruB_C_2"/>
    <property type="match status" value="1"/>
</dbReference>
<dbReference type="Pfam" id="PF01509">
    <property type="entry name" value="TruB_N"/>
    <property type="match status" value="2"/>
</dbReference>
<dbReference type="SMART" id="SM01136">
    <property type="entry name" value="DKCLD"/>
    <property type="match status" value="1"/>
</dbReference>
<dbReference type="SUPFAM" id="SSF55120">
    <property type="entry name" value="Pseudouridine synthase"/>
    <property type="match status" value="1"/>
</dbReference>
<dbReference type="SUPFAM" id="SSF88697">
    <property type="entry name" value="PUA domain-like"/>
    <property type="match status" value="1"/>
</dbReference>
<dbReference type="PROSITE" id="PS50890">
    <property type="entry name" value="PUA"/>
    <property type="match status" value="1"/>
</dbReference>
<keyword id="KW-0413">Isomerase</keyword>
<keyword id="KW-1185">Reference proteome</keyword>
<keyword id="KW-0819">tRNA processing</keyword>